<dbReference type="EMBL" id="X84096">
    <property type="protein sequence ID" value="CAA58892.1"/>
    <property type="molecule type" value="Genomic_DNA"/>
</dbReference>
<dbReference type="PIR" id="S66283">
    <property type="entry name" value="S57609"/>
</dbReference>
<dbReference type="PDB" id="2NC7">
    <property type="method" value="NMR"/>
    <property type="chains" value="A=131-148"/>
</dbReference>
<dbReference type="PDBsum" id="2NC7"/>
<dbReference type="BMRB" id="P49934"/>
<dbReference type="SMR" id="P49934"/>
<dbReference type="FunCoup" id="P49934">
    <property type="interactions" value="103"/>
</dbReference>
<dbReference type="PaxDb" id="9823-ENSSSCP00000027630"/>
<dbReference type="PeptideAtlas" id="P49934"/>
<dbReference type="InParanoid" id="P49934"/>
<dbReference type="Proteomes" id="UP000008227">
    <property type="component" value="Unplaced"/>
</dbReference>
<dbReference type="Proteomes" id="UP000314985">
    <property type="component" value="Unplaced"/>
</dbReference>
<dbReference type="Proteomes" id="UP000694570">
    <property type="component" value="Unplaced"/>
</dbReference>
<dbReference type="Proteomes" id="UP000694571">
    <property type="component" value="Unplaced"/>
</dbReference>
<dbReference type="Proteomes" id="UP000694720">
    <property type="component" value="Unplaced"/>
</dbReference>
<dbReference type="Proteomes" id="UP000694722">
    <property type="component" value="Unplaced"/>
</dbReference>
<dbReference type="Proteomes" id="UP000694723">
    <property type="component" value="Unplaced"/>
</dbReference>
<dbReference type="Proteomes" id="UP000694724">
    <property type="component" value="Unplaced"/>
</dbReference>
<dbReference type="Proteomes" id="UP000694725">
    <property type="component" value="Unplaced"/>
</dbReference>
<dbReference type="Proteomes" id="UP000694726">
    <property type="component" value="Unplaced"/>
</dbReference>
<dbReference type="Proteomes" id="UP000694727">
    <property type="component" value="Unplaced"/>
</dbReference>
<dbReference type="Proteomes" id="UP000694728">
    <property type="component" value="Unplaced"/>
</dbReference>
<dbReference type="GO" id="GO:0005615">
    <property type="term" value="C:extracellular space"/>
    <property type="evidence" value="ECO:0000318"/>
    <property type="project" value="GO_Central"/>
</dbReference>
<dbReference type="GO" id="GO:0001530">
    <property type="term" value="F:lipopolysaccharide binding"/>
    <property type="evidence" value="ECO:0000318"/>
    <property type="project" value="GO_Central"/>
</dbReference>
<dbReference type="GO" id="GO:0061844">
    <property type="term" value="P:antimicrobial humoral immune response mediated by antimicrobial peptide"/>
    <property type="evidence" value="ECO:0000318"/>
    <property type="project" value="GO_Central"/>
</dbReference>
<dbReference type="GO" id="GO:0050829">
    <property type="term" value="P:defense response to Gram-negative bacterium"/>
    <property type="evidence" value="ECO:0000318"/>
    <property type="project" value="GO_Central"/>
</dbReference>
<dbReference type="GO" id="GO:0050830">
    <property type="term" value="P:defense response to Gram-positive bacterium"/>
    <property type="evidence" value="ECO:0000318"/>
    <property type="project" value="GO_Central"/>
</dbReference>
<dbReference type="GO" id="GO:0045087">
    <property type="term" value="P:innate immune response"/>
    <property type="evidence" value="ECO:0000318"/>
    <property type="project" value="GO_Central"/>
</dbReference>
<dbReference type="FunFam" id="3.10.450.10:FF:000003">
    <property type="entry name" value="Cathelicidin antimicrobial peptide"/>
    <property type="match status" value="1"/>
</dbReference>
<dbReference type="Gene3D" id="3.10.450.10">
    <property type="match status" value="1"/>
</dbReference>
<dbReference type="InterPro" id="IPR001894">
    <property type="entry name" value="Cathelicidin-like"/>
</dbReference>
<dbReference type="InterPro" id="IPR018216">
    <property type="entry name" value="Cathelicidin_CS"/>
</dbReference>
<dbReference type="InterPro" id="IPR046350">
    <property type="entry name" value="Cystatin_sf"/>
</dbReference>
<dbReference type="PANTHER" id="PTHR10206">
    <property type="entry name" value="CATHELICIDIN"/>
    <property type="match status" value="1"/>
</dbReference>
<dbReference type="PANTHER" id="PTHR10206:SF2">
    <property type="entry name" value="CATHELICIDIN ANTIMICROBIAL PEPTIDE"/>
    <property type="match status" value="1"/>
</dbReference>
<dbReference type="Pfam" id="PF00666">
    <property type="entry name" value="Cathelicidins"/>
    <property type="match status" value="1"/>
</dbReference>
<dbReference type="SUPFAM" id="SSF54403">
    <property type="entry name" value="Cystatin/monellin"/>
    <property type="match status" value="1"/>
</dbReference>
<dbReference type="PROSITE" id="PS00946">
    <property type="entry name" value="CATHELICIDINS_1"/>
    <property type="match status" value="1"/>
</dbReference>
<dbReference type="PROSITE" id="PS00947">
    <property type="entry name" value="CATHELICIDINS_2"/>
    <property type="match status" value="1"/>
</dbReference>
<keyword id="KW-0002">3D-structure</keyword>
<keyword id="KW-0027">Amidation</keyword>
<keyword id="KW-0044">Antibiotic</keyword>
<keyword id="KW-0929">Antimicrobial</keyword>
<keyword id="KW-1015">Disulfide bond</keyword>
<keyword id="KW-1185">Reference proteome</keyword>
<keyword id="KW-0964">Secreted</keyword>
<keyword id="KW-0732">Signal</keyword>
<accession>P49934</accession>
<name>PG5_PIG</name>
<organism>
    <name type="scientific">Sus scrofa</name>
    <name type="common">Pig</name>
    <dbReference type="NCBI Taxonomy" id="9823"/>
    <lineage>
        <taxon>Eukaryota</taxon>
        <taxon>Metazoa</taxon>
        <taxon>Chordata</taxon>
        <taxon>Craniata</taxon>
        <taxon>Vertebrata</taxon>
        <taxon>Euteleostomi</taxon>
        <taxon>Mammalia</taxon>
        <taxon>Eutheria</taxon>
        <taxon>Laurasiatheria</taxon>
        <taxon>Artiodactyla</taxon>
        <taxon>Suina</taxon>
        <taxon>Suidae</taxon>
        <taxon>Sus</taxon>
    </lineage>
</organism>
<proteinExistence type="evidence at protein level"/>
<gene>
    <name type="primary">NPG5</name>
</gene>
<evidence type="ECO:0000250" key="1"/>
<evidence type="ECO:0000250" key="2">
    <source>
        <dbReference type="UniProtKB" id="P32194"/>
    </source>
</evidence>
<evidence type="ECO:0000255" key="3"/>
<evidence type="ECO:0000256" key="4">
    <source>
        <dbReference type="SAM" id="MobiDB-lite"/>
    </source>
</evidence>
<evidence type="ECO:0000305" key="5"/>
<evidence type="ECO:0007829" key="6">
    <source>
        <dbReference type="PDB" id="2NC7"/>
    </source>
</evidence>
<comment type="function">
    <text evidence="1">Microbicidal activity.</text>
</comment>
<comment type="subcellular location">
    <subcellularLocation>
        <location>Secreted</location>
    </subcellularLocation>
</comment>
<comment type="similarity">
    <text evidence="5">Belongs to the cathelicidin family.</text>
</comment>
<protein>
    <recommendedName>
        <fullName>Protegrin-5</fullName>
        <shortName>PG-5</shortName>
    </recommendedName>
</protein>
<feature type="signal peptide" evidence="3">
    <location>
        <begin position="1"/>
        <end position="29"/>
    </location>
</feature>
<feature type="propeptide" id="PRO_0000004752" evidence="3">
    <location>
        <begin position="30"/>
        <end position="130"/>
    </location>
</feature>
<feature type="peptide" id="PRO_0000004753" description="Protegrin-5">
    <location>
        <begin position="131"/>
        <end position="148"/>
    </location>
</feature>
<feature type="region of interest" description="Disordered" evidence="4">
    <location>
        <begin position="61"/>
        <end position="80"/>
    </location>
</feature>
<feature type="modified residue" description="Arginine amide" evidence="2">
    <location>
        <position position="148"/>
    </location>
</feature>
<feature type="disulfide bond" evidence="1">
    <location>
        <begin position="85"/>
        <end position="96"/>
    </location>
</feature>
<feature type="disulfide bond" evidence="1">
    <location>
        <begin position="107"/>
        <end position="124"/>
    </location>
</feature>
<feature type="disulfide bond" evidence="1">
    <location>
        <begin position="136"/>
        <end position="145"/>
    </location>
</feature>
<feature type="disulfide bond" evidence="1">
    <location>
        <begin position="138"/>
        <end position="143"/>
    </location>
</feature>
<feature type="strand" evidence="6">
    <location>
        <begin position="135"/>
        <end position="139"/>
    </location>
</feature>
<feature type="strand" evidence="6">
    <location>
        <begin position="142"/>
        <end position="146"/>
    </location>
</feature>
<reference key="1">
    <citation type="journal article" date="1995" name="FEBS Lett.">
        <title>The structure of porcine protegrin genes.</title>
        <authorList>
            <person name="Zhao C."/>
            <person name="Ganz T."/>
            <person name="Lehrer R.I."/>
        </authorList>
    </citation>
    <scope>NUCLEOTIDE SEQUENCE [GENOMIC DNA]</scope>
    <source>
        <strain>Red Duroc</strain>
    </source>
</reference>
<sequence>METQRASLCLGRWSLWLLLLGLVVPSASAQALSYREAVLRAVDRLNEQSSEANLYRLLELDQPPKADEDPGTPKPVSFTVKETVCPRPTRQPPELCDFKENGRVKQCVGTVTLDQIKDPLDITCNEVQGVRGGRLCYCRPRFCVCVGRG</sequence>